<comment type="function">
    <text evidence="1">Catalyzes the transfer of the phosphoenolpyruvate moiety from enoylpyruvoyl-2-diphospho-5'-guanosine (EPPG) to 7,8-didemethyl-8-hydroxy-5-deazariboflavin (FO) with the formation of dehydro coenzyme F420-0 and GMP.</text>
</comment>
<comment type="catalytic activity">
    <reaction evidence="1">
        <text>enolpyruvoyl-2-diphospho-5'-guanosine + 7,8-didemethyl-8-hydroxy-5-deazariboflavin = dehydro coenzyme F420-0 + GMP + H(+)</text>
        <dbReference type="Rhea" id="RHEA:27510"/>
        <dbReference type="ChEBI" id="CHEBI:15378"/>
        <dbReference type="ChEBI" id="CHEBI:58115"/>
        <dbReference type="ChEBI" id="CHEBI:59904"/>
        <dbReference type="ChEBI" id="CHEBI:143701"/>
        <dbReference type="ChEBI" id="CHEBI:143705"/>
        <dbReference type="EC" id="2.7.8.28"/>
    </reaction>
</comment>
<comment type="cofactor">
    <cofactor evidence="1">
        <name>Mg(2+)</name>
        <dbReference type="ChEBI" id="CHEBI:18420"/>
    </cofactor>
</comment>
<comment type="pathway">
    <text evidence="1">Cofactor biosynthesis; coenzyme F420 biosynthesis.</text>
</comment>
<comment type="subunit">
    <text evidence="1">Homodimer.</text>
</comment>
<comment type="similarity">
    <text evidence="1">Belongs to the CofD family.</text>
</comment>
<keyword id="KW-0002">3D-structure</keyword>
<keyword id="KW-0460">Magnesium</keyword>
<keyword id="KW-1185">Reference proteome</keyword>
<keyword id="KW-0808">Transferase</keyword>
<proteinExistence type="evidence at protein level"/>
<accession>A0QTG2</accession>
<accession>I7G6J5</accession>
<evidence type="ECO:0000255" key="1">
    <source>
        <dbReference type="HAMAP-Rule" id="MF_01257"/>
    </source>
</evidence>
<evidence type="ECO:0007829" key="2">
    <source>
        <dbReference type="PDB" id="6UW5"/>
    </source>
</evidence>
<gene>
    <name evidence="1" type="primary">fbiA</name>
    <name type="ordered locus">MSMEG_1830</name>
    <name type="ordered locus">MSMEI_1787</name>
</gene>
<dbReference type="EC" id="2.7.8.28" evidence="1"/>
<dbReference type="EMBL" id="CP000480">
    <property type="protein sequence ID" value="ABK71517.1"/>
    <property type="molecule type" value="Genomic_DNA"/>
</dbReference>
<dbReference type="EMBL" id="CP001663">
    <property type="protein sequence ID" value="AFP38259.1"/>
    <property type="molecule type" value="Genomic_DNA"/>
</dbReference>
<dbReference type="RefSeq" id="YP_886200.1">
    <property type="nucleotide sequence ID" value="NC_008596.1"/>
</dbReference>
<dbReference type="PDB" id="6UVX">
    <property type="method" value="X-ray"/>
    <property type="resolution" value="2.30 A"/>
    <property type="chains" value="A/B=1-327"/>
</dbReference>
<dbReference type="PDB" id="6UW1">
    <property type="method" value="X-ray"/>
    <property type="resolution" value="2.21 A"/>
    <property type="chains" value="A/B=1-327"/>
</dbReference>
<dbReference type="PDB" id="6UW3">
    <property type="method" value="X-ray"/>
    <property type="resolution" value="2.40 A"/>
    <property type="chains" value="A/B=1-327"/>
</dbReference>
<dbReference type="PDB" id="6UW5">
    <property type="method" value="X-ray"/>
    <property type="resolution" value="2.20 A"/>
    <property type="chains" value="A/B=1-327"/>
</dbReference>
<dbReference type="PDB" id="6UW7">
    <property type="method" value="X-ray"/>
    <property type="resolution" value="2.34 A"/>
    <property type="chains" value="A/B=1-327"/>
</dbReference>
<dbReference type="PDBsum" id="6UVX"/>
<dbReference type="PDBsum" id="6UW1"/>
<dbReference type="PDBsum" id="6UW3"/>
<dbReference type="PDBsum" id="6UW5"/>
<dbReference type="PDBsum" id="6UW7"/>
<dbReference type="SMR" id="A0QTG2"/>
<dbReference type="STRING" id="246196.MSMEG_1830"/>
<dbReference type="PaxDb" id="246196-MSMEI_1787"/>
<dbReference type="KEGG" id="msb:LJ00_09125"/>
<dbReference type="KEGG" id="msg:MSMEI_1787"/>
<dbReference type="KEGG" id="msm:MSMEG_1830"/>
<dbReference type="PATRIC" id="fig|246196.19.peg.1812"/>
<dbReference type="eggNOG" id="COG0391">
    <property type="taxonomic scope" value="Bacteria"/>
</dbReference>
<dbReference type="OrthoDB" id="7466225at2"/>
<dbReference type="UniPathway" id="UPA00071"/>
<dbReference type="Proteomes" id="UP000000757">
    <property type="component" value="Chromosome"/>
</dbReference>
<dbReference type="Proteomes" id="UP000006158">
    <property type="component" value="Chromosome"/>
</dbReference>
<dbReference type="GO" id="GO:0043743">
    <property type="term" value="F:LPPG:FO 2-phospho-L-lactate transferase activity"/>
    <property type="evidence" value="ECO:0007669"/>
    <property type="project" value="UniProtKB-EC"/>
</dbReference>
<dbReference type="GO" id="GO:0000287">
    <property type="term" value="F:magnesium ion binding"/>
    <property type="evidence" value="ECO:0007669"/>
    <property type="project" value="InterPro"/>
</dbReference>
<dbReference type="CDD" id="cd07186">
    <property type="entry name" value="CofD_like"/>
    <property type="match status" value="1"/>
</dbReference>
<dbReference type="FunFam" id="1.10.8.240:FF:000001">
    <property type="entry name" value="2-phospho-L-lactate transferase"/>
    <property type="match status" value="1"/>
</dbReference>
<dbReference type="Gene3D" id="1.10.8.240">
    <property type="entry name" value="CofD-like domain"/>
    <property type="match status" value="1"/>
</dbReference>
<dbReference type="Gene3D" id="3.40.50.10680">
    <property type="entry name" value="CofD-like domains"/>
    <property type="match status" value="1"/>
</dbReference>
<dbReference type="HAMAP" id="MF_01257">
    <property type="entry name" value="CofD"/>
    <property type="match status" value="1"/>
</dbReference>
<dbReference type="InterPro" id="IPR002882">
    <property type="entry name" value="CofD"/>
</dbReference>
<dbReference type="InterPro" id="IPR038136">
    <property type="entry name" value="CofD-like_dom_sf"/>
</dbReference>
<dbReference type="InterPro" id="IPR010115">
    <property type="entry name" value="FbiA/CofD"/>
</dbReference>
<dbReference type="NCBIfam" id="TIGR01819">
    <property type="entry name" value="F420_cofD"/>
    <property type="match status" value="1"/>
</dbReference>
<dbReference type="PANTHER" id="PTHR43007">
    <property type="entry name" value="2-PHOSPHO-L-LACTATE TRANSFERASE"/>
    <property type="match status" value="1"/>
</dbReference>
<dbReference type="PANTHER" id="PTHR43007:SF1">
    <property type="entry name" value="2-PHOSPHO-L-LACTATE TRANSFERASE"/>
    <property type="match status" value="1"/>
</dbReference>
<dbReference type="Pfam" id="PF01933">
    <property type="entry name" value="CofD"/>
    <property type="match status" value="1"/>
</dbReference>
<dbReference type="SUPFAM" id="SSF142338">
    <property type="entry name" value="CofD-like"/>
    <property type="match status" value="1"/>
</dbReference>
<sequence>MKITVLVGGVGGARFLLGVQNLLGLGSFADGPSKHELTAVVNIGDDAWMHGVRICPDLDTCMYTLGGGIDPDRGWGHRNETWNAKEELAAYGVQPDWFGLGDRDLATHLVRSQMLRAGYPLSQVTEALCKRWQPGARLLPASDERSETHVVITDPTDGERRAIHFQEWWVRYRAKVPTHSFAYVGADQATAGPGVVEAIGDADIVLLAPSNPVVSIGPILQIPGIRGALRSTSAPVIGYSPIIAGKPLRGMADECLKVIGVESTSQAVGEFFGARAGTGLLDGWLVHEGDHAQIEGVKVKAVPLLMTDPEATAAMVRAGLDLAGVSL</sequence>
<feature type="chain" id="PRO_1000067251" description="Phosphoenolpyruvate transferase">
    <location>
        <begin position="1"/>
        <end position="327"/>
    </location>
</feature>
<feature type="binding site" evidence="1">
    <location>
        <position position="59"/>
    </location>
    <ligand>
        <name>7,8-didemethyl-8-hydroxy-5-deazariboflavin</name>
        <dbReference type="ChEBI" id="CHEBI:59904"/>
    </ligand>
</feature>
<feature type="strand" evidence="2">
    <location>
        <begin position="2"/>
        <end position="7"/>
    </location>
</feature>
<feature type="helix" evidence="2">
    <location>
        <begin position="10"/>
        <end position="23"/>
    </location>
</feature>
<feature type="helix" evidence="2">
    <location>
        <begin position="26"/>
        <end position="28"/>
    </location>
</feature>
<feature type="strand" evidence="2">
    <location>
        <begin position="36"/>
        <end position="41"/>
    </location>
</feature>
<feature type="strand" evidence="2">
    <location>
        <begin position="47"/>
        <end position="49"/>
    </location>
</feature>
<feature type="strand" evidence="2">
    <location>
        <begin position="52"/>
        <end position="54"/>
    </location>
</feature>
<feature type="helix" evidence="2">
    <location>
        <begin position="56"/>
        <end position="65"/>
    </location>
</feature>
<feature type="turn" evidence="2">
    <location>
        <begin position="71"/>
        <end position="73"/>
    </location>
</feature>
<feature type="strand" evidence="2">
    <location>
        <begin position="74"/>
        <end position="77"/>
    </location>
</feature>
<feature type="helix" evidence="2">
    <location>
        <begin position="83"/>
        <end position="90"/>
    </location>
</feature>
<feature type="helix" evidence="2">
    <location>
        <begin position="102"/>
        <end position="116"/>
    </location>
</feature>
<feature type="helix" evidence="2">
    <location>
        <begin position="121"/>
        <end position="132"/>
    </location>
</feature>
<feature type="strand" evidence="2">
    <location>
        <begin position="135"/>
        <end position="141"/>
    </location>
</feature>
<feature type="strand" evidence="2">
    <location>
        <begin position="147"/>
        <end position="153"/>
    </location>
</feature>
<feature type="turn" evidence="2">
    <location>
        <begin position="155"/>
        <end position="157"/>
    </location>
</feature>
<feature type="strand" evidence="2">
    <location>
        <begin position="160"/>
        <end position="164"/>
    </location>
</feature>
<feature type="helix" evidence="2">
    <location>
        <begin position="165"/>
        <end position="169"/>
    </location>
</feature>
<feature type="strand" evidence="2">
    <location>
        <begin position="178"/>
        <end position="184"/>
    </location>
</feature>
<feature type="helix" evidence="2">
    <location>
        <begin position="186"/>
        <end position="188"/>
    </location>
</feature>
<feature type="helix" evidence="2">
    <location>
        <begin position="195"/>
        <end position="200"/>
    </location>
</feature>
<feature type="strand" evidence="2">
    <location>
        <begin position="203"/>
        <end position="207"/>
    </location>
</feature>
<feature type="turn" evidence="2">
    <location>
        <begin position="212"/>
        <end position="215"/>
    </location>
</feature>
<feature type="helix" evidence="2">
    <location>
        <begin position="216"/>
        <end position="220"/>
    </location>
</feature>
<feature type="helix" evidence="2">
    <location>
        <begin position="223"/>
        <end position="231"/>
    </location>
</feature>
<feature type="strand" evidence="2">
    <location>
        <begin position="236"/>
        <end position="239"/>
    </location>
</feature>
<feature type="strand" evidence="2">
    <location>
        <begin position="249"/>
        <end position="251"/>
    </location>
</feature>
<feature type="helix" evidence="2">
    <location>
        <begin position="252"/>
        <end position="258"/>
    </location>
</feature>
<feature type="helix" evidence="2">
    <location>
        <begin position="265"/>
        <end position="272"/>
    </location>
</feature>
<feature type="turn" evidence="2">
    <location>
        <begin position="275"/>
        <end position="278"/>
    </location>
</feature>
<feature type="strand" evidence="2">
    <location>
        <begin position="281"/>
        <end position="287"/>
    </location>
</feature>
<feature type="strand" evidence="2">
    <location>
        <begin position="298"/>
        <end position="302"/>
    </location>
</feature>
<feature type="helix" evidence="2">
    <location>
        <begin position="309"/>
        <end position="323"/>
    </location>
</feature>
<protein>
    <recommendedName>
        <fullName evidence="1">Phosphoenolpyruvate transferase</fullName>
        <ecNumber evidence="1">2.7.8.28</ecNumber>
    </recommendedName>
    <alternativeName>
        <fullName evidence="1">EPPG:FO PEP transferase</fullName>
    </alternativeName>
</protein>
<organism>
    <name type="scientific">Mycolicibacterium smegmatis (strain ATCC 700084 / mc(2)155)</name>
    <name type="common">Mycobacterium smegmatis</name>
    <dbReference type="NCBI Taxonomy" id="246196"/>
    <lineage>
        <taxon>Bacteria</taxon>
        <taxon>Bacillati</taxon>
        <taxon>Actinomycetota</taxon>
        <taxon>Actinomycetes</taxon>
        <taxon>Mycobacteriales</taxon>
        <taxon>Mycobacteriaceae</taxon>
        <taxon>Mycolicibacterium</taxon>
    </lineage>
</organism>
<reference key="1">
    <citation type="submission" date="2006-10" db="EMBL/GenBank/DDBJ databases">
        <authorList>
            <person name="Fleischmann R.D."/>
            <person name="Dodson R.J."/>
            <person name="Haft D.H."/>
            <person name="Merkel J.S."/>
            <person name="Nelson W.C."/>
            <person name="Fraser C.M."/>
        </authorList>
    </citation>
    <scope>NUCLEOTIDE SEQUENCE [LARGE SCALE GENOMIC DNA]</scope>
    <source>
        <strain>ATCC 700084 / mc(2)155</strain>
    </source>
</reference>
<reference key="2">
    <citation type="journal article" date="2007" name="Genome Biol.">
        <title>Interrupted coding sequences in Mycobacterium smegmatis: authentic mutations or sequencing errors?</title>
        <authorList>
            <person name="Deshayes C."/>
            <person name="Perrodou E."/>
            <person name="Gallien S."/>
            <person name="Euphrasie D."/>
            <person name="Schaeffer C."/>
            <person name="Van-Dorsselaer A."/>
            <person name="Poch O."/>
            <person name="Lecompte O."/>
            <person name="Reyrat J.-M."/>
        </authorList>
    </citation>
    <scope>NUCLEOTIDE SEQUENCE [LARGE SCALE GENOMIC DNA]</scope>
    <source>
        <strain>ATCC 700084 / mc(2)155</strain>
    </source>
</reference>
<reference key="3">
    <citation type="journal article" date="2009" name="Genome Res.">
        <title>Ortho-proteogenomics: multiple proteomes investigation through orthology and a new MS-based protocol.</title>
        <authorList>
            <person name="Gallien S."/>
            <person name="Perrodou E."/>
            <person name="Carapito C."/>
            <person name="Deshayes C."/>
            <person name="Reyrat J.-M."/>
            <person name="Van Dorsselaer A."/>
            <person name="Poch O."/>
            <person name="Schaeffer C."/>
            <person name="Lecompte O."/>
        </authorList>
    </citation>
    <scope>NUCLEOTIDE SEQUENCE [LARGE SCALE GENOMIC DNA]</scope>
    <source>
        <strain>ATCC 700084 / mc(2)155</strain>
    </source>
</reference>
<name>FBIA_MYCS2</name>